<reference key="1">
    <citation type="journal article" date="2000" name="Nature">
        <title>Genome sequence of the endocellular bacterial symbiont of aphids Buchnera sp. APS.</title>
        <authorList>
            <person name="Shigenobu S."/>
            <person name="Watanabe H."/>
            <person name="Hattori M."/>
            <person name="Sakaki Y."/>
            <person name="Ishikawa H."/>
        </authorList>
    </citation>
    <scope>NUCLEOTIDE SEQUENCE [LARGE SCALE GENOMIC DNA]</scope>
    <source>
        <strain>APS</strain>
    </source>
</reference>
<evidence type="ECO:0000255" key="1">
    <source>
        <dbReference type="HAMAP-Rule" id="MF_00336"/>
    </source>
</evidence>
<proteinExistence type="inferred from homology"/>
<protein>
    <recommendedName>
        <fullName evidence="1">ATP-dependent dethiobiotin synthetase BioD</fullName>
        <ecNumber evidence="1">6.3.3.3</ecNumber>
    </recommendedName>
    <alternativeName>
        <fullName evidence="1">DTB synthetase</fullName>
        <shortName evidence="1">DTBS</shortName>
    </alternativeName>
    <alternativeName>
        <fullName evidence="1">Dethiobiotin synthase</fullName>
    </alternativeName>
</protein>
<feature type="chain" id="PRO_0000187952" description="ATP-dependent dethiobiotin synthetase BioD">
    <location>
        <begin position="1"/>
        <end position="224"/>
    </location>
</feature>
<feature type="active site" evidence="1">
    <location>
        <position position="38"/>
    </location>
</feature>
<feature type="binding site" evidence="1">
    <location>
        <begin position="13"/>
        <end position="18"/>
    </location>
    <ligand>
        <name>ATP</name>
        <dbReference type="ChEBI" id="CHEBI:30616"/>
    </ligand>
</feature>
<feature type="binding site" evidence="1">
    <location>
        <position position="17"/>
    </location>
    <ligand>
        <name>Mg(2+)</name>
        <dbReference type="ChEBI" id="CHEBI:18420"/>
    </ligand>
</feature>
<feature type="binding site" evidence="1">
    <location>
        <position position="42"/>
    </location>
    <ligand>
        <name>substrate</name>
    </ligand>
</feature>
<feature type="binding site" evidence="1">
    <location>
        <position position="55"/>
    </location>
    <ligand>
        <name>ATP</name>
        <dbReference type="ChEBI" id="CHEBI:30616"/>
    </ligand>
</feature>
<feature type="binding site" evidence="1">
    <location>
        <position position="55"/>
    </location>
    <ligand>
        <name>Mg(2+)</name>
        <dbReference type="ChEBI" id="CHEBI:18420"/>
    </ligand>
</feature>
<feature type="binding site" evidence="1">
    <location>
        <begin position="116"/>
        <end position="119"/>
    </location>
    <ligand>
        <name>ATP</name>
        <dbReference type="ChEBI" id="CHEBI:30616"/>
    </ligand>
</feature>
<feature type="binding site" evidence="1">
    <location>
        <position position="116"/>
    </location>
    <ligand>
        <name>Mg(2+)</name>
        <dbReference type="ChEBI" id="CHEBI:18420"/>
    </ligand>
</feature>
<feature type="binding site" evidence="1">
    <location>
        <begin position="176"/>
        <end position="177"/>
    </location>
    <ligand>
        <name>ATP</name>
        <dbReference type="ChEBI" id="CHEBI:30616"/>
    </ligand>
</feature>
<feature type="binding site" evidence="1">
    <location>
        <position position="211"/>
    </location>
    <ligand>
        <name>ATP</name>
        <dbReference type="ChEBI" id="CHEBI:30616"/>
    </ligand>
</feature>
<dbReference type="EC" id="6.3.3.3" evidence="1"/>
<dbReference type="EMBL" id="BA000003">
    <property type="protein sequence ID" value="BAB13000.1"/>
    <property type="molecule type" value="Genomic_DNA"/>
</dbReference>
<dbReference type="RefSeq" id="NP_240114.1">
    <property type="nucleotide sequence ID" value="NC_002528.1"/>
</dbReference>
<dbReference type="RefSeq" id="WP_010896050.1">
    <property type="nucleotide sequence ID" value="NC_002528.1"/>
</dbReference>
<dbReference type="SMR" id="P57377"/>
<dbReference type="STRING" id="563178.BUAP5A_285"/>
<dbReference type="EnsemblBacteria" id="BAB13000">
    <property type="protein sequence ID" value="BAB13000"/>
    <property type="gene ID" value="BAB13000"/>
</dbReference>
<dbReference type="KEGG" id="buc:BU290"/>
<dbReference type="PATRIC" id="fig|107806.10.peg.300"/>
<dbReference type="eggNOG" id="COG0132">
    <property type="taxonomic scope" value="Bacteria"/>
</dbReference>
<dbReference type="HOGENOM" id="CLU_072551_0_0_6"/>
<dbReference type="UniPathway" id="UPA00078">
    <property type="reaction ID" value="UER00161"/>
</dbReference>
<dbReference type="Proteomes" id="UP000001806">
    <property type="component" value="Chromosome"/>
</dbReference>
<dbReference type="GO" id="GO:0005829">
    <property type="term" value="C:cytosol"/>
    <property type="evidence" value="ECO:0007669"/>
    <property type="project" value="TreeGrafter"/>
</dbReference>
<dbReference type="GO" id="GO:0005524">
    <property type="term" value="F:ATP binding"/>
    <property type="evidence" value="ECO:0007669"/>
    <property type="project" value="UniProtKB-UniRule"/>
</dbReference>
<dbReference type="GO" id="GO:0004141">
    <property type="term" value="F:dethiobiotin synthase activity"/>
    <property type="evidence" value="ECO:0007669"/>
    <property type="project" value="UniProtKB-UniRule"/>
</dbReference>
<dbReference type="GO" id="GO:0000287">
    <property type="term" value="F:magnesium ion binding"/>
    <property type="evidence" value="ECO:0007669"/>
    <property type="project" value="UniProtKB-UniRule"/>
</dbReference>
<dbReference type="GO" id="GO:0009102">
    <property type="term" value="P:biotin biosynthetic process"/>
    <property type="evidence" value="ECO:0007669"/>
    <property type="project" value="UniProtKB-UniRule"/>
</dbReference>
<dbReference type="CDD" id="cd03109">
    <property type="entry name" value="DTBS"/>
    <property type="match status" value="1"/>
</dbReference>
<dbReference type="FunFam" id="3.40.50.300:FF:000292">
    <property type="entry name" value="ATP-dependent dethiobiotin synthetase BioD"/>
    <property type="match status" value="1"/>
</dbReference>
<dbReference type="Gene3D" id="3.40.50.300">
    <property type="entry name" value="P-loop containing nucleotide triphosphate hydrolases"/>
    <property type="match status" value="1"/>
</dbReference>
<dbReference type="HAMAP" id="MF_00336">
    <property type="entry name" value="BioD"/>
    <property type="match status" value="1"/>
</dbReference>
<dbReference type="InterPro" id="IPR004472">
    <property type="entry name" value="DTB_synth_BioD"/>
</dbReference>
<dbReference type="InterPro" id="IPR027417">
    <property type="entry name" value="P-loop_NTPase"/>
</dbReference>
<dbReference type="NCBIfam" id="TIGR00347">
    <property type="entry name" value="bioD"/>
    <property type="match status" value="1"/>
</dbReference>
<dbReference type="PANTHER" id="PTHR43210">
    <property type="entry name" value="DETHIOBIOTIN SYNTHETASE"/>
    <property type="match status" value="1"/>
</dbReference>
<dbReference type="PANTHER" id="PTHR43210:SF5">
    <property type="entry name" value="DETHIOBIOTIN SYNTHETASE"/>
    <property type="match status" value="1"/>
</dbReference>
<dbReference type="Pfam" id="PF13500">
    <property type="entry name" value="AAA_26"/>
    <property type="match status" value="1"/>
</dbReference>
<dbReference type="PIRSF" id="PIRSF006755">
    <property type="entry name" value="DTB_synth"/>
    <property type="match status" value="1"/>
</dbReference>
<dbReference type="SUPFAM" id="SSF52540">
    <property type="entry name" value="P-loop containing nucleoside triphosphate hydrolases"/>
    <property type="match status" value="1"/>
</dbReference>
<keyword id="KW-0067">ATP-binding</keyword>
<keyword id="KW-0093">Biotin biosynthesis</keyword>
<keyword id="KW-0963">Cytoplasm</keyword>
<keyword id="KW-0436">Ligase</keyword>
<keyword id="KW-0460">Magnesium</keyword>
<keyword id="KW-0479">Metal-binding</keyword>
<keyword id="KW-0547">Nucleotide-binding</keyword>
<keyword id="KW-1185">Reference proteome</keyword>
<accession>P57377</accession>
<gene>
    <name evidence="1" type="primary">bioD</name>
    <name type="ordered locus">BU290</name>
</gene>
<organism>
    <name type="scientific">Buchnera aphidicola subsp. Acyrthosiphon pisum (strain APS)</name>
    <name type="common">Acyrthosiphon pisum symbiotic bacterium</name>
    <dbReference type="NCBI Taxonomy" id="107806"/>
    <lineage>
        <taxon>Bacteria</taxon>
        <taxon>Pseudomonadati</taxon>
        <taxon>Pseudomonadota</taxon>
        <taxon>Gammaproteobacteria</taxon>
        <taxon>Enterobacterales</taxon>
        <taxon>Erwiniaceae</taxon>
        <taxon>Buchnera</taxon>
    </lineage>
</organism>
<sequence length="224" mass="25165">MIKKFFITGTDTNVGKTIVSSILLKKATMSGYQTAGYKPVSSGGQKKSSGFFNQDAILLKKSSSIILSDREVNPIAFFENAPPHILSKFQKRSIKKEELSLGLNNITKKSNWILVEGAGGWYTPLSCKDTFSSWVKQEKLTVIIIIAIKLGCINHAILTEKAIISDQIKCGGWIANNIFPKDKYNMHYIQTLLNYIKSPFLGVVPYFKNKNRINFKKIKIKLPK</sequence>
<comment type="function">
    <text evidence="1">Catalyzes a mechanistically unusual reaction, the ATP-dependent insertion of CO2 between the N7 and N8 nitrogen atoms of 7,8-diaminopelargonic acid (DAPA, also called 7,8-diammoniononanoate) to form a ureido ring.</text>
</comment>
<comment type="catalytic activity">
    <reaction evidence="1">
        <text>(7R,8S)-7,8-diammoniononanoate + CO2 + ATP = (4R,5S)-dethiobiotin + ADP + phosphate + 3 H(+)</text>
        <dbReference type="Rhea" id="RHEA:15805"/>
        <dbReference type="ChEBI" id="CHEBI:15378"/>
        <dbReference type="ChEBI" id="CHEBI:16526"/>
        <dbReference type="ChEBI" id="CHEBI:30616"/>
        <dbReference type="ChEBI" id="CHEBI:43474"/>
        <dbReference type="ChEBI" id="CHEBI:149469"/>
        <dbReference type="ChEBI" id="CHEBI:149473"/>
        <dbReference type="ChEBI" id="CHEBI:456216"/>
        <dbReference type="EC" id="6.3.3.3"/>
    </reaction>
</comment>
<comment type="cofactor">
    <cofactor evidence="1">
        <name>Mg(2+)</name>
        <dbReference type="ChEBI" id="CHEBI:18420"/>
    </cofactor>
</comment>
<comment type="pathway">
    <text evidence="1">Cofactor biosynthesis; biotin biosynthesis; biotin from 7,8-diaminononanoate: step 1/2.</text>
</comment>
<comment type="subunit">
    <text evidence="1">Homodimer.</text>
</comment>
<comment type="subcellular location">
    <subcellularLocation>
        <location evidence="1">Cytoplasm</location>
    </subcellularLocation>
</comment>
<comment type="similarity">
    <text evidence="1">Belongs to the dethiobiotin synthetase family.</text>
</comment>
<name>BIOD_BUCAI</name>